<reference key="1">
    <citation type="journal article" date="2005" name="Nat. Biotechnol.">
        <title>Complete genome sequence of the acetic acid bacterium Gluconobacter oxydans.</title>
        <authorList>
            <person name="Prust C."/>
            <person name="Hoffmeister M."/>
            <person name="Liesegang H."/>
            <person name="Wiezer A."/>
            <person name="Fricke W.F."/>
            <person name="Ehrenreich A."/>
            <person name="Gottschalk G."/>
            <person name="Deppenmeier U."/>
        </authorList>
    </citation>
    <scope>NUCLEOTIDE SEQUENCE [LARGE SCALE GENOMIC DNA]</scope>
    <source>
        <strain>621H</strain>
    </source>
</reference>
<feature type="chain" id="PRO_1000016126" description="Aspartyl/glutamyl-tRNA(Asn/Gln) amidotransferase subunit C">
    <location>
        <begin position="1"/>
        <end position="95"/>
    </location>
</feature>
<sequence length="95" mass="10536">MSLDAKTVTRIARLARIGLQPEEIETLGKDMGSIIDWVEQLKEVDVTGVDPMIGTGLAKPRLREDRVTDGNCRDKVLSNAPEREGPFYTVPKVVE</sequence>
<accession>Q5FND2</accession>
<evidence type="ECO:0000255" key="1">
    <source>
        <dbReference type="HAMAP-Rule" id="MF_00122"/>
    </source>
</evidence>
<dbReference type="EC" id="6.3.5.-" evidence="1"/>
<dbReference type="EMBL" id="CP000009">
    <property type="protein sequence ID" value="AAW62115.1"/>
    <property type="molecule type" value="Genomic_DNA"/>
</dbReference>
<dbReference type="RefSeq" id="WP_011253884.1">
    <property type="nucleotide sequence ID" value="NC_006677.1"/>
</dbReference>
<dbReference type="SMR" id="Q5FND2"/>
<dbReference type="STRING" id="290633.GOX2384"/>
<dbReference type="KEGG" id="gox:GOX2384"/>
<dbReference type="eggNOG" id="COG0721">
    <property type="taxonomic scope" value="Bacteria"/>
</dbReference>
<dbReference type="HOGENOM" id="CLU_105899_2_0_5"/>
<dbReference type="Proteomes" id="UP000006375">
    <property type="component" value="Chromosome"/>
</dbReference>
<dbReference type="GO" id="GO:0050566">
    <property type="term" value="F:asparaginyl-tRNA synthase (glutamine-hydrolyzing) activity"/>
    <property type="evidence" value="ECO:0007669"/>
    <property type="project" value="RHEA"/>
</dbReference>
<dbReference type="GO" id="GO:0005524">
    <property type="term" value="F:ATP binding"/>
    <property type="evidence" value="ECO:0007669"/>
    <property type="project" value="UniProtKB-KW"/>
</dbReference>
<dbReference type="GO" id="GO:0050567">
    <property type="term" value="F:glutaminyl-tRNA synthase (glutamine-hydrolyzing) activity"/>
    <property type="evidence" value="ECO:0007669"/>
    <property type="project" value="UniProtKB-UniRule"/>
</dbReference>
<dbReference type="GO" id="GO:0070681">
    <property type="term" value="P:glutaminyl-tRNAGln biosynthesis via transamidation"/>
    <property type="evidence" value="ECO:0007669"/>
    <property type="project" value="TreeGrafter"/>
</dbReference>
<dbReference type="GO" id="GO:0006450">
    <property type="term" value="P:regulation of translational fidelity"/>
    <property type="evidence" value="ECO:0007669"/>
    <property type="project" value="InterPro"/>
</dbReference>
<dbReference type="GO" id="GO:0006412">
    <property type="term" value="P:translation"/>
    <property type="evidence" value="ECO:0007669"/>
    <property type="project" value="UniProtKB-UniRule"/>
</dbReference>
<dbReference type="Gene3D" id="1.10.20.60">
    <property type="entry name" value="Glu-tRNAGln amidotransferase C subunit, N-terminal domain"/>
    <property type="match status" value="1"/>
</dbReference>
<dbReference type="HAMAP" id="MF_00122">
    <property type="entry name" value="GatC"/>
    <property type="match status" value="1"/>
</dbReference>
<dbReference type="InterPro" id="IPR036113">
    <property type="entry name" value="Asp/Glu-ADT_sf_sub_c"/>
</dbReference>
<dbReference type="InterPro" id="IPR003837">
    <property type="entry name" value="GatC"/>
</dbReference>
<dbReference type="NCBIfam" id="TIGR00135">
    <property type="entry name" value="gatC"/>
    <property type="match status" value="1"/>
</dbReference>
<dbReference type="PANTHER" id="PTHR15004">
    <property type="entry name" value="GLUTAMYL-TRNA(GLN) AMIDOTRANSFERASE SUBUNIT C, MITOCHONDRIAL"/>
    <property type="match status" value="1"/>
</dbReference>
<dbReference type="PANTHER" id="PTHR15004:SF0">
    <property type="entry name" value="GLUTAMYL-TRNA(GLN) AMIDOTRANSFERASE SUBUNIT C, MITOCHONDRIAL"/>
    <property type="match status" value="1"/>
</dbReference>
<dbReference type="Pfam" id="PF02686">
    <property type="entry name" value="GatC"/>
    <property type="match status" value="1"/>
</dbReference>
<dbReference type="SUPFAM" id="SSF141000">
    <property type="entry name" value="Glu-tRNAGln amidotransferase C subunit"/>
    <property type="match status" value="1"/>
</dbReference>
<proteinExistence type="inferred from homology"/>
<protein>
    <recommendedName>
        <fullName evidence="1">Aspartyl/glutamyl-tRNA(Asn/Gln) amidotransferase subunit C</fullName>
        <shortName evidence="1">Asp/Glu-ADT subunit C</shortName>
        <ecNumber evidence="1">6.3.5.-</ecNumber>
    </recommendedName>
</protein>
<keyword id="KW-0067">ATP-binding</keyword>
<keyword id="KW-0436">Ligase</keyword>
<keyword id="KW-0547">Nucleotide-binding</keyword>
<keyword id="KW-0648">Protein biosynthesis</keyword>
<keyword id="KW-1185">Reference proteome</keyword>
<gene>
    <name evidence="1" type="primary">gatC</name>
    <name type="ordered locus">GOX2384</name>
</gene>
<organism>
    <name type="scientific">Gluconobacter oxydans (strain 621H)</name>
    <name type="common">Gluconobacter suboxydans</name>
    <dbReference type="NCBI Taxonomy" id="290633"/>
    <lineage>
        <taxon>Bacteria</taxon>
        <taxon>Pseudomonadati</taxon>
        <taxon>Pseudomonadota</taxon>
        <taxon>Alphaproteobacteria</taxon>
        <taxon>Acetobacterales</taxon>
        <taxon>Acetobacteraceae</taxon>
        <taxon>Gluconobacter</taxon>
    </lineage>
</organism>
<comment type="function">
    <text evidence="1">Allows the formation of correctly charged Asn-tRNA(Asn) or Gln-tRNA(Gln) through the transamidation of misacylated Asp-tRNA(Asn) or Glu-tRNA(Gln) in organisms which lack either or both of asparaginyl-tRNA or glutaminyl-tRNA synthetases. The reaction takes place in the presence of glutamine and ATP through an activated phospho-Asp-tRNA(Asn) or phospho-Glu-tRNA(Gln).</text>
</comment>
<comment type="catalytic activity">
    <reaction evidence="1">
        <text>L-glutamyl-tRNA(Gln) + L-glutamine + ATP + H2O = L-glutaminyl-tRNA(Gln) + L-glutamate + ADP + phosphate + H(+)</text>
        <dbReference type="Rhea" id="RHEA:17521"/>
        <dbReference type="Rhea" id="RHEA-COMP:9681"/>
        <dbReference type="Rhea" id="RHEA-COMP:9684"/>
        <dbReference type="ChEBI" id="CHEBI:15377"/>
        <dbReference type="ChEBI" id="CHEBI:15378"/>
        <dbReference type="ChEBI" id="CHEBI:29985"/>
        <dbReference type="ChEBI" id="CHEBI:30616"/>
        <dbReference type="ChEBI" id="CHEBI:43474"/>
        <dbReference type="ChEBI" id="CHEBI:58359"/>
        <dbReference type="ChEBI" id="CHEBI:78520"/>
        <dbReference type="ChEBI" id="CHEBI:78521"/>
        <dbReference type="ChEBI" id="CHEBI:456216"/>
    </reaction>
</comment>
<comment type="catalytic activity">
    <reaction evidence="1">
        <text>L-aspartyl-tRNA(Asn) + L-glutamine + ATP + H2O = L-asparaginyl-tRNA(Asn) + L-glutamate + ADP + phosphate + 2 H(+)</text>
        <dbReference type="Rhea" id="RHEA:14513"/>
        <dbReference type="Rhea" id="RHEA-COMP:9674"/>
        <dbReference type="Rhea" id="RHEA-COMP:9677"/>
        <dbReference type="ChEBI" id="CHEBI:15377"/>
        <dbReference type="ChEBI" id="CHEBI:15378"/>
        <dbReference type="ChEBI" id="CHEBI:29985"/>
        <dbReference type="ChEBI" id="CHEBI:30616"/>
        <dbReference type="ChEBI" id="CHEBI:43474"/>
        <dbReference type="ChEBI" id="CHEBI:58359"/>
        <dbReference type="ChEBI" id="CHEBI:78515"/>
        <dbReference type="ChEBI" id="CHEBI:78516"/>
        <dbReference type="ChEBI" id="CHEBI:456216"/>
    </reaction>
</comment>
<comment type="subunit">
    <text evidence="1">Heterotrimer of A, B and C subunits.</text>
</comment>
<comment type="similarity">
    <text evidence="1">Belongs to the GatC family.</text>
</comment>
<name>GATC_GLUOX</name>